<gene>
    <name evidence="1" type="primary">mtnC</name>
    <name type="ordered locus">SO_0084</name>
</gene>
<organism>
    <name type="scientific">Shewanella oneidensis (strain ATCC 700550 / JCM 31522 / CIP 106686 / LMG 19005 / NCIMB 14063 / MR-1)</name>
    <dbReference type="NCBI Taxonomy" id="211586"/>
    <lineage>
        <taxon>Bacteria</taxon>
        <taxon>Pseudomonadati</taxon>
        <taxon>Pseudomonadota</taxon>
        <taxon>Gammaproteobacteria</taxon>
        <taxon>Alteromonadales</taxon>
        <taxon>Shewanellaceae</taxon>
        <taxon>Shewanella</taxon>
    </lineage>
</organism>
<keyword id="KW-0028">Amino-acid biosynthesis</keyword>
<keyword id="KW-0378">Hydrolase</keyword>
<keyword id="KW-0460">Magnesium</keyword>
<keyword id="KW-0479">Metal-binding</keyword>
<keyword id="KW-0486">Methionine biosynthesis</keyword>
<keyword id="KW-1185">Reference proteome</keyword>
<reference key="1">
    <citation type="journal article" date="2002" name="Nat. Biotechnol.">
        <title>Genome sequence of the dissimilatory metal ion-reducing bacterium Shewanella oneidensis.</title>
        <authorList>
            <person name="Heidelberg J.F."/>
            <person name="Paulsen I.T."/>
            <person name="Nelson K.E."/>
            <person name="Gaidos E.J."/>
            <person name="Nelson W.C."/>
            <person name="Read T.D."/>
            <person name="Eisen J.A."/>
            <person name="Seshadri R."/>
            <person name="Ward N.L."/>
            <person name="Methe B.A."/>
            <person name="Clayton R.A."/>
            <person name="Meyer T."/>
            <person name="Tsapin A."/>
            <person name="Scott J."/>
            <person name="Beanan M.J."/>
            <person name="Brinkac L.M."/>
            <person name="Daugherty S.C."/>
            <person name="DeBoy R.T."/>
            <person name="Dodson R.J."/>
            <person name="Durkin A.S."/>
            <person name="Haft D.H."/>
            <person name="Kolonay J.F."/>
            <person name="Madupu R."/>
            <person name="Peterson J.D."/>
            <person name="Umayam L.A."/>
            <person name="White O."/>
            <person name="Wolf A.M."/>
            <person name="Vamathevan J.J."/>
            <person name="Weidman J.F."/>
            <person name="Impraim M."/>
            <person name="Lee K."/>
            <person name="Berry K.J."/>
            <person name="Lee C."/>
            <person name="Mueller J."/>
            <person name="Khouri H.M."/>
            <person name="Gill J."/>
            <person name="Utterback T.R."/>
            <person name="McDonald L.A."/>
            <person name="Feldblyum T.V."/>
            <person name="Smith H.O."/>
            <person name="Venter J.C."/>
            <person name="Nealson K.H."/>
            <person name="Fraser C.M."/>
        </authorList>
    </citation>
    <scope>NUCLEOTIDE SEQUENCE [LARGE SCALE GENOMIC DNA]</scope>
    <source>
        <strain>ATCC 700550 / JCM 31522 / CIP 106686 / LMG 19005 / NCIMB 14063 / MR-1</strain>
    </source>
</reference>
<sequence length="226" mass="25472">MGIRAIVVDTAGTTTDLTFIQDVLFPYSVKALPDFLAQNQHNVLVENCICDTRDIALEPDADLNRVTEILQQWVREDRKATPLKTLQGLIWKQGYAHDEFKGHIFPDFIEAVKRFSAQNLRIYSFSSGSVDAQKLLFSHSDGGDLTEMFNGHFDTRTGNKLDKQAYCNILNTISLSPKQVLFVSDVIEELKAADAAGMMTCQMVRDSKQRTGDFRTINSFDKLVIE</sequence>
<accession>Q8EKK8</accession>
<protein>
    <recommendedName>
        <fullName evidence="1">Enolase-phosphatase E1</fullName>
        <ecNumber evidence="1">3.1.3.77</ecNumber>
    </recommendedName>
    <alternativeName>
        <fullName evidence="1">2,3-diketo-5-methylthio-1-phosphopentane phosphatase</fullName>
    </alternativeName>
</protein>
<name>MTNC_SHEON</name>
<comment type="function">
    <text evidence="1">Bifunctional enzyme that catalyzes the enolization of 2,3-diketo-5-methylthiopentyl-1-phosphate (DK-MTP-1-P) into the intermediate 2-hydroxy-3-keto-5-methylthiopentenyl-1-phosphate (HK-MTPenyl-1-P), which is then dephosphorylated to form the acireductone 1,2-dihydroxy-3-keto-5-methylthiopentene (DHK-MTPene).</text>
</comment>
<comment type="catalytic activity">
    <reaction evidence="1">
        <text>5-methylsulfanyl-2,3-dioxopentyl phosphate + H2O = 1,2-dihydroxy-5-(methylsulfanyl)pent-1-en-3-one + phosphate</text>
        <dbReference type="Rhea" id="RHEA:21700"/>
        <dbReference type="ChEBI" id="CHEBI:15377"/>
        <dbReference type="ChEBI" id="CHEBI:43474"/>
        <dbReference type="ChEBI" id="CHEBI:49252"/>
        <dbReference type="ChEBI" id="CHEBI:58828"/>
        <dbReference type="EC" id="3.1.3.77"/>
    </reaction>
</comment>
<comment type="cofactor">
    <cofactor evidence="1">
        <name>Mg(2+)</name>
        <dbReference type="ChEBI" id="CHEBI:18420"/>
    </cofactor>
    <text evidence="1">Binds 1 Mg(2+) ion per subunit.</text>
</comment>
<comment type="pathway">
    <text evidence="1">Amino-acid biosynthesis; L-methionine biosynthesis via salvage pathway; L-methionine from S-methyl-5-thio-alpha-D-ribose 1-phosphate: step 3/6.</text>
</comment>
<comment type="pathway">
    <text evidence="1">Amino-acid biosynthesis; L-methionine biosynthesis via salvage pathway; L-methionine from S-methyl-5-thio-alpha-D-ribose 1-phosphate: step 4/6.</text>
</comment>
<comment type="subunit">
    <text evidence="1">Monomer.</text>
</comment>
<comment type="similarity">
    <text evidence="1">Belongs to the HAD-like hydrolase superfamily. MasA/MtnC family.</text>
</comment>
<evidence type="ECO:0000255" key="1">
    <source>
        <dbReference type="HAMAP-Rule" id="MF_01681"/>
    </source>
</evidence>
<dbReference type="EC" id="3.1.3.77" evidence="1"/>
<dbReference type="EMBL" id="AE014299">
    <property type="protein sequence ID" value="AAN53171.1"/>
    <property type="molecule type" value="Genomic_DNA"/>
</dbReference>
<dbReference type="RefSeq" id="NP_715726.1">
    <property type="nucleotide sequence ID" value="NC_004347.2"/>
</dbReference>
<dbReference type="RefSeq" id="WP_011070497.1">
    <property type="nucleotide sequence ID" value="NC_004347.2"/>
</dbReference>
<dbReference type="SMR" id="Q8EKK8"/>
<dbReference type="STRING" id="211586.SO_0084"/>
<dbReference type="PaxDb" id="211586-SO_0084"/>
<dbReference type="KEGG" id="son:SO_0084"/>
<dbReference type="PATRIC" id="fig|211586.12.peg.85"/>
<dbReference type="eggNOG" id="COG4229">
    <property type="taxonomic scope" value="Bacteria"/>
</dbReference>
<dbReference type="HOGENOM" id="CLU_023273_0_0_6"/>
<dbReference type="OrthoDB" id="9797416at2"/>
<dbReference type="PhylomeDB" id="Q8EKK8"/>
<dbReference type="BioCyc" id="SONE211586:G1GMP-85-MONOMER"/>
<dbReference type="UniPathway" id="UPA00904">
    <property type="reaction ID" value="UER00876"/>
</dbReference>
<dbReference type="UniPathway" id="UPA00904">
    <property type="reaction ID" value="UER00877"/>
</dbReference>
<dbReference type="Proteomes" id="UP000008186">
    <property type="component" value="Chromosome"/>
</dbReference>
<dbReference type="GO" id="GO:0043715">
    <property type="term" value="F:2,3-diketo-5-methylthiopentyl-1-phosphate enolase activity"/>
    <property type="evidence" value="ECO:0007669"/>
    <property type="project" value="UniProtKB-UniRule"/>
</dbReference>
<dbReference type="GO" id="GO:0043716">
    <property type="term" value="F:2-hydroxy-3-keto-5-methylthiopentenyl-1-phosphate phosphatase activity"/>
    <property type="evidence" value="ECO:0007669"/>
    <property type="project" value="UniProtKB-UniRule"/>
</dbReference>
<dbReference type="GO" id="GO:0043874">
    <property type="term" value="F:acireductone synthase activity"/>
    <property type="evidence" value="ECO:0000318"/>
    <property type="project" value="GO_Central"/>
</dbReference>
<dbReference type="GO" id="GO:0000287">
    <property type="term" value="F:magnesium ion binding"/>
    <property type="evidence" value="ECO:0007669"/>
    <property type="project" value="UniProtKB-UniRule"/>
</dbReference>
<dbReference type="GO" id="GO:0019509">
    <property type="term" value="P:L-methionine salvage from methylthioadenosine"/>
    <property type="evidence" value="ECO:0000318"/>
    <property type="project" value="GO_Central"/>
</dbReference>
<dbReference type="CDD" id="cd01629">
    <property type="entry name" value="HAD_EP"/>
    <property type="match status" value="1"/>
</dbReference>
<dbReference type="FunFam" id="1.10.720.60:FF:000008">
    <property type="entry name" value="Enolase-phosphatase E1"/>
    <property type="match status" value="1"/>
</dbReference>
<dbReference type="Gene3D" id="1.10.720.60">
    <property type="match status" value="1"/>
</dbReference>
<dbReference type="Gene3D" id="3.40.50.1000">
    <property type="entry name" value="HAD superfamily/HAD-like"/>
    <property type="match status" value="1"/>
</dbReference>
<dbReference type="HAMAP" id="MF_01681">
    <property type="entry name" value="Salvage_MtnC"/>
    <property type="match status" value="1"/>
</dbReference>
<dbReference type="InterPro" id="IPR023943">
    <property type="entry name" value="Enolase-ppase_E1"/>
</dbReference>
<dbReference type="InterPro" id="IPR036412">
    <property type="entry name" value="HAD-like_sf"/>
</dbReference>
<dbReference type="InterPro" id="IPR006439">
    <property type="entry name" value="HAD-SF_hydro_IA"/>
</dbReference>
<dbReference type="InterPro" id="IPR023214">
    <property type="entry name" value="HAD_sf"/>
</dbReference>
<dbReference type="NCBIfam" id="TIGR01691">
    <property type="entry name" value="enolase-ppase"/>
    <property type="match status" value="1"/>
</dbReference>
<dbReference type="NCBIfam" id="TIGR01549">
    <property type="entry name" value="HAD-SF-IA-v1"/>
    <property type="match status" value="1"/>
</dbReference>
<dbReference type="PANTHER" id="PTHR20371">
    <property type="entry name" value="ENOLASE-PHOSPHATASE E1"/>
    <property type="match status" value="1"/>
</dbReference>
<dbReference type="PANTHER" id="PTHR20371:SF1">
    <property type="entry name" value="ENOLASE-PHOSPHATASE E1"/>
    <property type="match status" value="1"/>
</dbReference>
<dbReference type="Pfam" id="PF00702">
    <property type="entry name" value="Hydrolase"/>
    <property type="match status" value="1"/>
</dbReference>
<dbReference type="PRINTS" id="PR00413">
    <property type="entry name" value="HADHALOGNASE"/>
</dbReference>
<dbReference type="SFLD" id="SFLDG01129">
    <property type="entry name" value="C1.5:_HAD__Beta-PGM__Phosphata"/>
    <property type="match status" value="1"/>
</dbReference>
<dbReference type="SFLD" id="SFLDF00044">
    <property type="entry name" value="enolase-phosphatase"/>
    <property type="match status" value="1"/>
</dbReference>
<dbReference type="SUPFAM" id="SSF56784">
    <property type="entry name" value="HAD-like"/>
    <property type="match status" value="1"/>
</dbReference>
<proteinExistence type="inferred from homology"/>
<feature type="chain" id="PRO_0000357404" description="Enolase-phosphatase E1">
    <location>
        <begin position="1"/>
        <end position="226"/>
    </location>
</feature>